<sequence length="308" mass="34015">MVGLQPSEVPPTTVVKFLGAGTAACFADLLTFPLDTAKVRLQIQGENPGVQSVQYRGVLGTILTMVRTEGPRSPYSGLVAGLHRQMSFASIRIGLYDSVKQFYTPKGTDHSSVAIRILAGCTTGAMAVTCAQPTDVVKVRFQAMIRLGTGGERKYRGTMDAYRTIAREEGVRGLWKGTWPNITRNAIVNCAEMVTYDIIKEKLLDSHLFTDNFPCHFVSAFGAGFCATVVASPVDVVKTRYMNAPPGRYRSPLHCMLRMVAQEGPTAFYKGFMPSFLRLGSWNVMMFVTYEQLKRALMKVQVLRESPF</sequence>
<comment type="function">
    <text evidence="2">Putative transmembrane transporter that plays a role in mitochondrial metabolism via an as yet unclear mechanism. Originally, this mitochondrial protein was thought to act as a proton transmembrane transporter from the mitochondrial intermembrane space into the matrix, causing proton leaks through the inner mitochondrial membrane, thereby uncoupling mitochondrial membrane potential generation from ATP synthesis. However, this function is controversial and uncoupling may not be the function, or at least not the main function, but rather a consequence of more conventional metabolite transporter activity.</text>
</comment>
<comment type="subunit">
    <text evidence="2">Interacts with HAX1; the interaction is direct and calcium-dependent.</text>
</comment>
<comment type="subcellular location">
    <subcellularLocation>
        <location evidence="3">Mitochondrion inner membrane</location>
        <topology evidence="4">Multi-pass membrane protein</topology>
    </subcellularLocation>
</comment>
<comment type="similarity">
    <text evidence="6">Belongs to the mitochondrial carrier (TC 2.A.29) family.</text>
</comment>
<keyword id="KW-0472">Membrane</keyword>
<keyword id="KW-0496">Mitochondrion</keyword>
<keyword id="KW-0999">Mitochondrion inner membrane</keyword>
<keyword id="KW-1185">Reference proteome</keyword>
<keyword id="KW-0677">Repeat</keyword>
<keyword id="KW-0812">Transmembrane</keyword>
<keyword id="KW-1133">Transmembrane helix</keyword>
<keyword id="KW-0813">Transport</keyword>
<feature type="chain" id="PRO_0000090675" description="Putative mitochondrial transporter UCP3">
    <location>
        <begin position="1"/>
        <end position="308"/>
    </location>
</feature>
<feature type="topological domain" description="Mitochondrial intermembrane" evidence="3">
    <location>
        <begin position="1"/>
        <end position="10"/>
    </location>
</feature>
<feature type="transmembrane region" description="Helical; Name=1" evidence="4">
    <location>
        <begin position="11"/>
        <end position="32"/>
    </location>
</feature>
<feature type="topological domain" description="Mitochondrial matrix" evidence="3">
    <location>
        <begin position="33"/>
        <end position="73"/>
    </location>
</feature>
<feature type="transmembrane region" description="Helical; Name=2" evidence="4">
    <location>
        <begin position="74"/>
        <end position="96"/>
    </location>
</feature>
<feature type="topological domain" description="Mitochondrial intermembrane" evidence="3">
    <location>
        <begin position="97"/>
        <end position="116"/>
    </location>
</feature>
<feature type="transmembrane region" description="Helical; Name=3" evidence="4">
    <location>
        <begin position="117"/>
        <end position="133"/>
    </location>
</feature>
<feature type="topological domain" description="Mitochondrial matrix" evidence="3">
    <location>
        <begin position="134"/>
        <end position="179"/>
    </location>
</feature>
<feature type="transmembrane region" description="Helical; Name=4" evidence="4">
    <location>
        <begin position="180"/>
        <end position="196"/>
    </location>
</feature>
<feature type="topological domain" description="Mitochondrial intermembrane" evidence="3">
    <location>
        <begin position="197"/>
        <end position="213"/>
    </location>
</feature>
<feature type="transmembrane region" description="Helical; Name=5" evidence="4">
    <location>
        <begin position="214"/>
        <end position="233"/>
    </location>
</feature>
<feature type="topological domain" description="Mitochondrial matrix" evidence="3">
    <location>
        <begin position="234"/>
        <end position="267"/>
    </location>
</feature>
<feature type="transmembrane region" description="Helical; Name=6" evidence="4">
    <location>
        <begin position="268"/>
        <end position="290"/>
    </location>
</feature>
<feature type="topological domain" description="Mitochondrial intermembrane" evidence="3">
    <location>
        <begin position="291"/>
        <end position="308"/>
    </location>
</feature>
<feature type="repeat" description="Solcar 1">
    <location>
        <begin position="11"/>
        <end position="102"/>
    </location>
</feature>
<feature type="repeat" description="Solcar 2">
    <location>
        <begin position="111"/>
        <end position="202"/>
    </location>
</feature>
<feature type="repeat" description="Solcar 3">
    <location>
        <begin position="211"/>
        <end position="296"/>
    </location>
</feature>
<feature type="region of interest" description="Purine nucleotide binding" evidence="1">
    <location>
        <begin position="275"/>
        <end position="297"/>
    </location>
</feature>
<proteinExistence type="evidence at transcript level"/>
<organism>
    <name type="scientific">Rattus norvegicus</name>
    <name type="common">Rat</name>
    <dbReference type="NCBI Taxonomy" id="10116"/>
    <lineage>
        <taxon>Eukaryota</taxon>
        <taxon>Metazoa</taxon>
        <taxon>Chordata</taxon>
        <taxon>Craniata</taxon>
        <taxon>Vertebrata</taxon>
        <taxon>Euteleostomi</taxon>
        <taxon>Mammalia</taxon>
        <taxon>Eutheria</taxon>
        <taxon>Euarchontoglires</taxon>
        <taxon>Glires</taxon>
        <taxon>Rodentia</taxon>
        <taxon>Myomorpha</taxon>
        <taxon>Muroidea</taxon>
        <taxon>Muridae</taxon>
        <taxon>Murinae</taxon>
        <taxon>Rattus</taxon>
    </lineage>
</organism>
<name>UCP3_RAT</name>
<gene>
    <name evidence="7" type="primary">Ucp3</name>
    <name type="synonym">Slc25a9</name>
</gene>
<dbReference type="EMBL" id="AB006614">
    <property type="protein sequence ID" value="BAA23355.1"/>
    <property type="molecule type" value="mRNA"/>
</dbReference>
<dbReference type="EMBL" id="U92069">
    <property type="protein sequence ID" value="AAB71523.1"/>
    <property type="molecule type" value="mRNA"/>
</dbReference>
<dbReference type="EMBL" id="AF035943">
    <property type="protein sequence ID" value="AAC05740.1"/>
    <property type="molecule type" value="mRNA"/>
</dbReference>
<dbReference type="EMBL" id="AF030163">
    <property type="protein sequence ID" value="AAD01891.1"/>
    <property type="molecule type" value="mRNA"/>
</dbReference>
<dbReference type="EMBL" id="BC072546">
    <property type="protein sequence ID" value="AAH72546.1"/>
    <property type="molecule type" value="mRNA"/>
</dbReference>
<dbReference type="RefSeq" id="NP_037299.1">
    <property type="nucleotide sequence ID" value="NM_013167.2"/>
</dbReference>
<dbReference type="FunCoup" id="P56499">
    <property type="interactions" value="34"/>
</dbReference>
<dbReference type="STRING" id="10116.ENSRNOP00000024005"/>
<dbReference type="PhosphoSitePlus" id="P56499"/>
<dbReference type="PaxDb" id="10116-ENSRNOP00000024005"/>
<dbReference type="Ensembl" id="ENSRNOT00000024005.6">
    <property type="protein sequence ID" value="ENSRNOP00000024005.3"/>
    <property type="gene ID" value="ENSRNOG00000017716.6"/>
</dbReference>
<dbReference type="GeneID" id="25708"/>
<dbReference type="KEGG" id="rno:25708"/>
<dbReference type="UCSC" id="RGD:3933">
    <property type="organism name" value="rat"/>
</dbReference>
<dbReference type="AGR" id="RGD:3933"/>
<dbReference type="CTD" id="7352"/>
<dbReference type="RGD" id="3933">
    <property type="gene designation" value="Ucp3"/>
</dbReference>
<dbReference type="eggNOG" id="KOG0753">
    <property type="taxonomic scope" value="Eukaryota"/>
</dbReference>
<dbReference type="GeneTree" id="ENSGT00940000161030"/>
<dbReference type="HOGENOM" id="CLU_015166_14_2_1"/>
<dbReference type="InParanoid" id="P56499"/>
<dbReference type="OMA" id="TRIMSAH"/>
<dbReference type="OrthoDB" id="448427at2759"/>
<dbReference type="PhylomeDB" id="P56499"/>
<dbReference type="TreeFam" id="TF323211"/>
<dbReference type="Reactome" id="R-RNO-167826">
    <property type="pathway name" value="The fatty acid cycling model"/>
</dbReference>
<dbReference type="PRO" id="PR:P56499"/>
<dbReference type="Proteomes" id="UP000002494">
    <property type="component" value="Chromosome 1"/>
</dbReference>
<dbReference type="Bgee" id="ENSRNOG00000017716">
    <property type="expression patterns" value="Expressed in skeletal muscle tissue and 11 other cell types or tissues"/>
</dbReference>
<dbReference type="GO" id="GO:0005743">
    <property type="term" value="C:mitochondrial inner membrane"/>
    <property type="evidence" value="ECO:0000250"/>
    <property type="project" value="UniProtKB"/>
</dbReference>
<dbReference type="GO" id="GO:0005739">
    <property type="term" value="C:mitochondrion"/>
    <property type="evidence" value="ECO:0000266"/>
    <property type="project" value="RGD"/>
</dbReference>
<dbReference type="GO" id="GO:0017077">
    <property type="term" value="F:oxidative phosphorylation uncoupler activity"/>
    <property type="evidence" value="ECO:0000266"/>
    <property type="project" value="RGD"/>
</dbReference>
<dbReference type="GO" id="GO:0015078">
    <property type="term" value="F:proton transmembrane transporter activity"/>
    <property type="evidence" value="ECO:0000266"/>
    <property type="project" value="RGD"/>
</dbReference>
<dbReference type="GO" id="GO:1990845">
    <property type="term" value="P:adaptive thermogenesis"/>
    <property type="evidence" value="ECO:0000318"/>
    <property type="project" value="GO_Central"/>
</dbReference>
<dbReference type="GO" id="GO:0032870">
    <property type="term" value="P:cellular response to hormone stimulus"/>
    <property type="evidence" value="ECO:0000270"/>
    <property type="project" value="RGD"/>
</dbReference>
<dbReference type="GO" id="GO:0006631">
    <property type="term" value="P:fatty acid metabolic process"/>
    <property type="evidence" value="ECO:0000266"/>
    <property type="project" value="RGD"/>
</dbReference>
<dbReference type="GO" id="GO:1901373">
    <property type="term" value="P:lipid hydroperoxide transport"/>
    <property type="evidence" value="ECO:0000266"/>
    <property type="project" value="RGD"/>
</dbReference>
<dbReference type="GO" id="GO:1990542">
    <property type="term" value="P:mitochondrial transmembrane transport"/>
    <property type="evidence" value="ECO:0000318"/>
    <property type="project" value="GO_Central"/>
</dbReference>
<dbReference type="GO" id="GO:1902600">
    <property type="term" value="P:proton transmembrane transport"/>
    <property type="evidence" value="ECO:0000266"/>
    <property type="project" value="RGD"/>
</dbReference>
<dbReference type="GO" id="GO:0014823">
    <property type="term" value="P:response to activity"/>
    <property type="evidence" value="ECO:0000270"/>
    <property type="project" value="RGD"/>
</dbReference>
<dbReference type="GO" id="GO:0009409">
    <property type="term" value="P:response to cold"/>
    <property type="evidence" value="ECO:0000318"/>
    <property type="project" value="GO_Central"/>
</dbReference>
<dbReference type="GO" id="GO:1901557">
    <property type="term" value="P:response to fenofibrate"/>
    <property type="evidence" value="ECO:0000270"/>
    <property type="project" value="RGD"/>
</dbReference>
<dbReference type="GO" id="GO:0051384">
    <property type="term" value="P:response to glucocorticoid"/>
    <property type="evidence" value="ECO:0000270"/>
    <property type="project" value="RGD"/>
</dbReference>
<dbReference type="GO" id="GO:0001666">
    <property type="term" value="P:response to hypoxia"/>
    <property type="evidence" value="ECO:0000314"/>
    <property type="project" value="HGNC-UCL"/>
</dbReference>
<dbReference type="GO" id="GO:0032868">
    <property type="term" value="P:response to insulin"/>
    <property type="evidence" value="ECO:0000270"/>
    <property type="project" value="RGD"/>
</dbReference>
<dbReference type="GO" id="GO:0007584">
    <property type="term" value="P:response to nutrient"/>
    <property type="evidence" value="ECO:0000270"/>
    <property type="project" value="RGD"/>
</dbReference>
<dbReference type="GO" id="GO:0048545">
    <property type="term" value="P:response to steroid hormone"/>
    <property type="evidence" value="ECO:0000270"/>
    <property type="project" value="RGD"/>
</dbReference>
<dbReference type="GO" id="GO:0000303">
    <property type="term" value="P:response to superoxide"/>
    <property type="evidence" value="ECO:0000314"/>
    <property type="project" value="RGD"/>
</dbReference>
<dbReference type="FunFam" id="1.50.40.10:FF:000008">
    <property type="entry name" value="Mitochondrial uncoupling protein 2"/>
    <property type="match status" value="1"/>
</dbReference>
<dbReference type="Gene3D" id="1.50.40.10">
    <property type="entry name" value="Mitochondrial carrier domain"/>
    <property type="match status" value="1"/>
</dbReference>
<dbReference type="InterPro" id="IPR002067">
    <property type="entry name" value="Mit_carrier"/>
</dbReference>
<dbReference type="InterPro" id="IPR050391">
    <property type="entry name" value="Mito_Metabolite_Transporter"/>
</dbReference>
<dbReference type="InterPro" id="IPR018108">
    <property type="entry name" value="Mitochondrial_sb/sol_carrier"/>
</dbReference>
<dbReference type="InterPro" id="IPR023395">
    <property type="entry name" value="Mt_carrier_dom_sf"/>
</dbReference>
<dbReference type="PANTHER" id="PTHR45618">
    <property type="entry name" value="MITOCHONDRIAL DICARBOXYLATE CARRIER-RELATED"/>
    <property type="match status" value="1"/>
</dbReference>
<dbReference type="Pfam" id="PF00153">
    <property type="entry name" value="Mito_carr"/>
    <property type="match status" value="3"/>
</dbReference>
<dbReference type="PRINTS" id="PR00784">
    <property type="entry name" value="MTUNCOUPLING"/>
</dbReference>
<dbReference type="SUPFAM" id="SSF103506">
    <property type="entry name" value="Mitochondrial carrier"/>
    <property type="match status" value="1"/>
</dbReference>
<dbReference type="PROSITE" id="PS50920">
    <property type="entry name" value="SOLCAR"/>
    <property type="match status" value="3"/>
</dbReference>
<evidence type="ECO:0000250" key="1"/>
<evidence type="ECO:0000250" key="2">
    <source>
        <dbReference type="UniProtKB" id="P55916"/>
    </source>
</evidence>
<evidence type="ECO:0000250" key="3">
    <source>
        <dbReference type="UniProtKB" id="P56501"/>
    </source>
</evidence>
<evidence type="ECO:0000255" key="4"/>
<evidence type="ECO:0000303" key="5">
    <source>
    </source>
</evidence>
<evidence type="ECO:0000305" key="6"/>
<evidence type="ECO:0000312" key="7">
    <source>
        <dbReference type="RGD" id="3933"/>
    </source>
</evidence>
<accession>P56499</accession>
<protein>
    <recommendedName>
        <fullName evidence="6">Putative mitochondrial transporter UCP3</fullName>
    </recommendedName>
    <alternativeName>
        <fullName>Solute carrier family 25 member 9</fullName>
    </alternativeName>
    <alternativeName>
        <fullName evidence="5">Uncoupling protein-3</fullName>
        <shortName>UCP 3</shortName>
    </alternativeName>
</protein>
<reference key="1">
    <citation type="journal article" date="1997" name="FEBS Lett.">
        <title>Cloning of rat uncoupling protein-3 and uncoupling protein-2 cDNAs: their gene expression in rats fed high-fat diet.</title>
        <authorList>
            <person name="Matsuda J."/>
            <person name="Hosoda K."/>
            <person name="Itoh H."/>
            <person name="Son C."/>
            <person name="Doi K."/>
            <person name="Tanaka T."/>
            <person name="Fukunaga Y."/>
            <person name="Inoue G."/>
            <person name="Nishimura H."/>
            <person name="Yoshimasa Y."/>
            <person name="Yamori Y."/>
            <person name="Nakao K."/>
        </authorList>
    </citation>
    <scope>NUCLEOTIDE SEQUENCE [MRNA]</scope>
    <source>
        <strain>Sprague-Dawley</strain>
        <tissue>Skeletal muscle</tissue>
    </source>
</reference>
<reference key="2">
    <citation type="journal article" date="1998" name="FASEB J.">
        <title>Effect of endurance training on mRNA expression of uncoupling proteins 1, 2, and 3 in the rat.</title>
        <authorList>
            <person name="Boss O."/>
            <person name="Samec S."/>
            <person name="Desplanches D."/>
            <person name="Mayet M.-H."/>
            <person name="Seydoux J."/>
            <person name="Muzzin P."/>
            <person name="Giacobino J.-P."/>
        </authorList>
    </citation>
    <scope>NUCLEOTIDE SEQUENCE [MRNA]</scope>
    <source>
        <strain>Wistar</strain>
        <tissue>Skeletal muscle</tissue>
    </source>
</reference>
<reference key="3">
    <citation type="journal article" date="1998" name="Am. J. Physiol.">
        <title>Bidirectional regulation of uncoupling protein-3 and GLUT-4 mRNA in skeletal muscle by cold.</title>
        <authorList>
            <person name="Lin B.-Z."/>
            <person name="Coughlin S."/>
            <person name="Pilch P.F."/>
        </authorList>
    </citation>
    <scope>NUCLEOTIDE SEQUENCE [MRNA]</scope>
    <source>
        <strain>Sprague-Dawley</strain>
        <tissue>Skeletal muscle</tissue>
    </source>
</reference>
<reference key="4">
    <citation type="submission" date="1997-10" db="EMBL/GenBank/DDBJ databases">
        <title>Lipopolysaccharide treatment increases thermogenesis and induces uncoupling protein-3 gene expression in skeletal muscle.</title>
        <authorList>
            <person name="Solanes G."/>
            <person name="Valet P."/>
            <person name="Lowell B.B."/>
        </authorList>
    </citation>
    <scope>NUCLEOTIDE SEQUENCE [MRNA]</scope>
    <source>
        <strain>Sprague-Dawley</strain>
        <tissue>Skeletal muscle</tissue>
    </source>
</reference>
<reference key="5">
    <citation type="journal article" date="2004" name="Genome Res.">
        <title>The status, quality, and expansion of the NIH full-length cDNA project: the Mammalian Gene Collection (MGC).</title>
        <authorList>
            <consortium name="The MGC Project Team"/>
        </authorList>
    </citation>
    <scope>NUCLEOTIDE SEQUENCE [LARGE SCALE MRNA]</scope>
    <source>
        <tissue>Heart</tissue>
    </source>
</reference>